<keyword id="KW-0067">ATP-binding</keyword>
<keyword id="KW-0963">Cytoplasm</keyword>
<keyword id="KW-0436">Ligase</keyword>
<keyword id="KW-0460">Magnesium</keyword>
<keyword id="KW-0479">Metal-binding</keyword>
<keyword id="KW-0547">Nucleotide-binding</keyword>
<keyword id="KW-0658">Purine biosynthesis</keyword>
<gene>
    <name evidence="1" type="primary">purL</name>
    <name type="ordered locus">BPUM_0602</name>
</gene>
<protein>
    <recommendedName>
        <fullName evidence="1">Phosphoribosylformylglycinamidine synthase subunit PurL</fullName>
        <shortName evidence="1">FGAM synthase</shortName>
        <ecNumber evidence="1">6.3.5.3</ecNumber>
    </recommendedName>
    <alternativeName>
        <fullName evidence="1">Formylglycinamide ribonucleotide amidotransferase subunit II</fullName>
        <shortName evidence="1">FGAR amidotransferase II</shortName>
        <shortName evidence="1">FGAR-AT II</shortName>
    </alternativeName>
    <alternativeName>
        <fullName evidence="1">Glutamine amidotransferase PurL</fullName>
    </alternativeName>
    <alternativeName>
        <fullName evidence="1">Phosphoribosylformylglycinamidine synthase subunit II</fullName>
    </alternativeName>
</protein>
<accession>A8FAM7</accession>
<evidence type="ECO:0000255" key="1">
    <source>
        <dbReference type="HAMAP-Rule" id="MF_00420"/>
    </source>
</evidence>
<dbReference type="EC" id="6.3.5.3" evidence="1"/>
<dbReference type="EMBL" id="CP000813">
    <property type="protein sequence ID" value="ABV61294.1"/>
    <property type="molecule type" value="Genomic_DNA"/>
</dbReference>
<dbReference type="RefSeq" id="WP_012009143.1">
    <property type="nucleotide sequence ID" value="NC_009848.4"/>
</dbReference>
<dbReference type="SMR" id="A8FAM7"/>
<dbReference type="STRING" id="315750.BPUM_0602"/>
<dbReference type="GeneID" id="5619850"/>
<dbReference type="KEGG" id="bpu:BPUM_0602"/>
<dbReference type="eggNOG" id="COG0046">
    <property type="taxonomic scope" value="Bacteria"/>
</dbReference>
<dbReference type="HOGENOM" id="CLU_003100_0_1_9"/>
<dbReference type="OrthoDB" id="9804441at2"/>
<dbReference type="UniPathway" id="UPA00074">
    <property type="reaction ID" value="UER00128"/>
</dbReference>
<dbReference type="Proteomes" id="UP000001355">
    <property type="component" value="Chromosome"/>
</dbReference>
<dbReference type="GO" id="GO:0005737">
    <property type="term" value="C:cytoplasm"/>
    <property type="evidence" value="ECO:0007669"/>
    <property type="project" value="UniProtKB-SubCell"/>
</dbReference>
<dbReference type="GO" id="GO:0005524">
    <property type="term" value="F:ATP binding"/>
    <property type="evidence" value="ECO:0007669"/>
    <property type="project" value="UniProtKB-UniRule"/>
</dbReference>
<dbReference type="GO" id="GO:0000287">
    <property type="term" value="F:magnesium ion binding"/>
    <property type="evidence" value="ECO:0007669"/>
    <property type="project" value="UniProtKB-UniRule"/>
</dbReference>
<dbReference type="GO" id="GO:0004642">
    <property type="term" value="F:phosphoribosylformylglycinamidine synthase activity"/>
    <property type="evidence" value="ECO:0007669"/>
    <property type="project" value="UniProtKB-UniRule"/>
</dbReference>
<dbReference type="GO" id="GO:0006189">
    <property type="term" value="P:'de novo' IMP biosynthetic process"/>
    <property type="evidence" value="ECO:0007669"/>
    <property type="project" value="UniProtKB-UniRule"/>
</dbReference>
<dbReference type="CDD" id="cd02203">
    <property type="entry name" value="PurL_repeat1"/>
    <property type="match status" value="1"/>
</dbReference>
<dbReference type="CDD" id="cd02204">
    <property type="entry name" value="PurL_repeat2"/>
    <property type="match status" value="1"/>
</dbReference>
<dbReference type="FunFam" id="3.30.1330.10:FF:000004">
    <property type="entry name" value="Phosphoribosylformylglycinamidine synthase subunit PurL"/>
    <property type="match status" value="1"/>
</dbReference>
<dbReference type="FunFam" id="3.30.1330.10:FF:000011">
    <property type="entry name" value="Phosphoribosylformylglycinamidine synthase subunit PurL"/>
    <property type="match status" value="1"/>
</dbReference>
<dbReference type="FunFam" id="3.90.650.10:FF:000009">
    <property type="entry name" value="Phosphoribosylformylglycinamidine synthase subunit PurL"/>
    <property type="match status" value="1"/>
</dbReference>
<dbReference type="Gene3D" id="3.90.650.10">
    <property type="entry name" value="PurM-like C-terminal domain"/>
    <property type="match status" value="2"/>
</dbReference>
<dbReference type="Gene3D" id="3.30.1330.10">
    <property type="entry name" value="PurM-like, N-terminal domain"/>
    <property type="match status" value="2"/>
</dbReference>
<dbReference type="HAMAP" id="MF_00420">
    <property type="entry name" value="PurL_2"/>
    <property type="match status" value="1"/>
</dbReference>
<dbReference type="InterPro" id="IPR010074">
    <property type="entry name" value="PRibForGlyAmidine_synth_PurL"/>
</dbReference>
<dbReference type="InterPro" id="IPR041609">
    <property type="entry name" value="PurL_linker"/>
</dbReference>
<dbReference type="InterPro" id="IPR010918">
    <property type="entry name" value="PurM-like_C_dom"/>
</dbReference>
<dbReference type="InterPro" id="IPR036676">
    <property type="entry name" value="PurM-like_C_sf"/>
</dbReference>
<dbReference type="InterPro" id="IPR016188">
    <property type="entry name" value="PurM-like_N"/>
</dbReference>
<dbReference type="InterPro" id="IPR036921">
    <property type="entry name" value="PurM-like_N_sf"/>
</dbReference>
<dbReference type="NCBIfam" id="TIGR01736">
    <property type="entry name" value="FGAM_synth_II"/>
    <property type="match status" value="1"/>
</dbReference>
<dbReference type="NCBIfam" id="NF002290">
    <property type="entry name" value="PRK01213.1"/>
    <property type="match status" value="1"/>
</dbReference>
<dbReference type="PANTHER" id="PTHR43555">
    <property type="entry name" value="PHOSPHORIBOSYLFORMYLGLYCINAMIDINE SYNTHASE SUBUNIT PURL"/>
    <property type="match status" value="1"/>
</dbReference>
<dbReference type="PANTHER" id="PTHR43555:SF1">
    <property type="entry name" value="PHOSPHORIBOSYLFORMYLGLYCINAMIDINE SYNTHASE SUBUNIT PURL"/>
    <property type="match status" value="1"/>
</dbReference>
<dbReference type="Pfam" id="PF00586">
    <property type="entry name" value="AIRS"/>
    <property type="match status" value="2"/>
</dbReference>
<dbReference type="Pfam" id="PF02769">
    <property type="entry name" value="AIRS_C"/>
    <property type="match status" value="2"/>
</dbReference>
<dbReference type="Pfam" id="PF18072">
    <property type="entry name" value="FGAR-AT_linker"/>
    <property type="match status" value="1"/>
</dbReference>
<dbReference type="PIRSF" id="PIRSF001587">
    <property type="entry name" value="FGAM_synthase_II"/>
    <property type="match status" value="1"/>
</dbReference>
<dbReference type="SUPFAM" id="SSF56042">
    <property type="entry name" value="PurM C-terminal domain-like"/>
    <property type="match status" value="2"/>
</dbReference>
<dbReference type="SUPFAM" id="SSF55326">
    <property type="entry name" value="PurM N-terminal domain-like"/>
    <property type="match status" value="2"/>
</dbReference>
<feature type="chain" id="PRO_1000060087" description="Phosphoribosylformylglycinamidine synthase subunit PurL">
    <location>
        <begin position="1"/>
        <end position="743"/>
    </location>
</feature>
<feature type="active site" evidence="1">
    <location>
        <position position="54"/>
    </location>
</feature>
<feature type="active site" description="Proton acceptor" evidence="1">
    <location>
        <position position="100"/>
    </location>
</feature>
<feature type="binding site" evidence="1">
    <location>
        <position position="57"/>
    </location>
    <ligand>
        <name>ATP</name>
        <dbReference type="ChEBI" id="CHEBI:30616"/>
    </ligand>
</feature>
<feature type="binding site" evidence="1">
    <location>
        <position position="96"/>
    </location>
    <ligand>
        <name>ATP</name>
        <dbReference type="ChEBI" id="CHEBI:30616"/>
    </ligand>
</feature>
<feature type="binding site" evidence="1">
    <location>
        <position position="98"/>
    </location>
    <ligand>
        <name>Mg(2+)</name>
        <dbReference type="ChEBI" id="CHEBI:18420"/>
        <label>1</label>
    </ligand>
</feature>
<feature type="binding site" evidence="1">
    <location>
        <begin position="99"/>
        <end position="102"/>
    </location>
    <ligand>
        <name>substrate</name>
    </ligand>
</feature>
<feature type="binding site" evidence="1">
    <location>
        <position position="121"/>
    </location>
    <ligand>
        <name>substrate</name>
    </ligand>
</feature>
<feature type="binding site" evidence="1">
    <location>
        <position position="122"/>
    </location>
    <ligand>
        <name>Mg(2+)</name>
        <dbReference type="ChEBI" id="CHEBI:18420"/>
        <label>2</label>
    </ligand>
</feature>
<feature type="binding site" evidence="1">
    <location>
        <position position="245"/>
    </location>
    <ligand>
        <name>substrate</name>
    </ligand>
</feature>
<feature type="binding site" evidence="1">
    <location>
        <position position="273"/>
    </location>
    <ligand>
        <name>Mg(2+)</name>
        <dbReference type="ChEBI" id="CHEBI:18420"/>
        <label>2</label>
    </ligand>
</feature>
<feature type="binding site" evidence="1">
    <location>
        <begin position="317"/>
        <end position="319"/>
    </location>
    <ligand>
        <name>substrate</name>
    </ligand>
</feature>
<feature type="binding site" evidence="1">
    <location>
        <position position="500"/>
    </location>
    <ligand>
        <name>ATP</name>
        <dbReference type="ChEBI" id="CHEBI:30616"/>
    </ligand>
</feature>
<feature type="binding site" evidence="1">
    <location>
        <position position="537"/>
    </location>
    <ligand>
        <name>ATP</name>
        <dbReference type="ChEBI" id="CHEBI:30616"/>
    </ligand>
</feature>
<feature type="binding site" evidence="1">
    <location>
        <position position="538"/>
    </location>
    <ligand>
        <name>Mg(2+)</name>
        <dbReference type="ChEBI" id="CHEBI:18420"/>
        <label>1</label>
    </ligand>
</feature>
<feature type="binding site" evidence="1">
    <location>
        <position position="540"/>
    </location>
    <ligand>
        <name>substrate</name>
    </ligand>
</feature>
<organism>
    <name type="scientific">Bacillus pumilus (strain SAFR-032)</name>
    <dbReference type="NCBI Taxonomy" id="315750"/>
    <lineage>
        <taxon>Bacteria</taxon>
        <taxon>Bacillati</taxon>
        <taxon>Bacillota</taxon>
        <taxon>Bacilli</taxon>
        <taxon>Bacillales</taxon>
        <taxon>Bacillaceae</taxon>
        <taxon>Bacillus</taxon>
    </lineage>
</organism>
<name>PURL_BACP2</name>
<sequence length="743" mass="80340">MSLLLEPSHKQIKEEKLYQQMGLSDEEFALIESIIGRLPNYTETGIFSVMWSEHCSYKNSKPVLSKFPTKGEHVLQGPGEGAGIVDIGDNQAVVFKIESHNHPSAIEPYQGAATGVGGIIRDVFSMGARPIAVLNSLRFGELTSPRVKYLFEEVVAGIAGYGNCIGIPTVGGEVHFDQSYEGNPLVNAMCVGLINHEDIKKGQAKGVGNTVMYVGAKTGRDGIHGATFASEEFSDESEEKRSAVQVGDPFMEKLLLEACLEVIKNDALVGIQDMGAAGLTSSSAEMASKAGSGIEMNLDLIPQRETGMSAYEMMLSESQERMLLVIEKGREQEIIDIFEKYDLEAVSVGHVTDDKMLRLLHQGEVVCELPVDALAEEAPVYHKPSSEPAYYREFLETKVEAPAITDAAQTLKQLLQQPTIASKEWVYDQYDYMVRTNTVVAPGSDAGVLRIRGTKKALAMTTDCNARYLYLDPEVGGKIAVAEAARNIVCSGARPLAVTDNLNFGNPEKPEIFWQIEKSADGISEACRTLSTPVIGGNVSLYNESNGTAIYPTPVIGMVGLVEDTAHITTKSFQQAGDVIFVIGETKEEFAGSELQKMTEGRIYGKAPEIDLDVELARQEALLAAIQNGLVQSAHDVSEGGLGVALAESTFGTDGLGADIQIDLDSEASLFSETQSRFVVTVKPEHREAFAAAVKDAKEVGTVTNDGVFTVKNQEGQQWIHAAVNELERAWKGAIPCLLKSEA</sequence>
<reference key="1">
    <citation type="journal article" date="2007" name="PLoS ONE">
        <title>Paradoxical DNA repair and peroxide resistance gene conservation in Bacillus pumilus SAFR-032.</title>
        <authorList>
            <person name="Gioia J."/>
            <person name="Yerrapragada S."/>
            <person name="Qin X."/>
            <person name="Jiang H."/>
            <person name="Igboeli O.C."/>
            <person name="Muzny D."/>
            <person name="Dugan-Rocha S."/>
            <person name="Ding Y."/>
            <person name="Hawes A."/>
            <person name="Liu W."/>
            <person name="Perez L."/>
            <person name="Kovar C."/>
            <person name="Dinh H."/>
            <person name="Lee S."/>
            <person name="Nazareth L."/>
            <person name="Blyth P."/>
            <person name="Holder M."/>
            <person name="Buhay C."/>
            <person name="Tirumalai M.R."/>
            <person name="Liu Y."/>
            <person name="Dasgupta I."/>
            <person name="Bokhetache L."/>
            <person name="Fujita M."/>
            <person name="Karouia F."/>
            <person name="Eswara Moorthy P."/>
            <person name="Siefert J."/>
            <person name="Uzman A."/>
            <person name="Buzumbo P."/>
            <person name="Verma A."/>
            <person name="Zwiya H."/>
            <person name="McWilliams B.D."/>
            <person name="Olowu A."/>
            <person name="Clinkenbeard K.D."/>
            <person name="Newcombe D."/>
            <person name="Golebiewski L."/>
            <person name="Petrosino J.F."/>
            <person name="Nicholson W.L."/>
            <person name="Fox G.E."/>
            <person name="Venkateswaran K."/>
            <person name="Highlander S.K."/>
            <person name="Weinstock G.M."/>
        </authorList>
    </citation>
    <scope>NUCLEOTIDE SEQUENCE [LARGE SCALE GENOMIC DNA]</scope>
    <source>
        <strain>SAFR-032</strain>
    </source>
</reference>
<comment type="function">
    <text evidence="1">Part of the phosphoribosylformylglycinamidine synthase complex involved in the purines biosynthetic pathway. Catalyzes the ATP-dependent conversion of formylglycinamide ribonucleotide (FGAR) and glutamine to yield formylglycinamidine ribonucleotide (FGAM) and glutamate. The FGAM synthase complex is composed of three subunits. PurQ produces an ammonia molecule by converting glutamine to glutamate. PurL transfers the ammonia molecule to FGAR to form FGAM in an ATP-dependent manner. PurS interacts with PurQ and PurL and is thought to assist in the transfer of the ammonia molecule from PurQ to PurL.</text>
</comment>
<comment type="catalytic activity">
    <reaction evidence="1">
        <text>N(2)-formyl-N(1)-(5-phospho-beta-D-ribosyl)glycinamide + L-glutamine + ATP + H2O = 2-formamido-N(1)-(5-O-phospho-beta-D-ribosyl)acetamidine + L-glutamate + ADP + phosphate + H(+)</text>
        <dbReference type="Rhea" id="RHEA:17129"/>
        <dbReference type="ChEBI" id="CHEBI:15377"/>
        <dbReference type="ChEBI" id="CHEBI:15378"/>
        <dbReference type="ChEBI" id="CHEBI:29985"/>
        <dbReference type="ChEBI" id="CHEBI:30616"/>
        <dbReference type="ChEBI" id="CHEBI:43474"/>
        <dbReference type="ChEBI" id="CHEBI:58359"/>
        <dbReference type="ChEBI" id="CHEBI:147286"/>
        <dbReference type="ChEBI" id="CHEBI:147287"/>
        <dbReference type="ChEBI" id="CHEBI:456216"/>
        <dbReference type="EC" id="6.3.5.3"/>
    </reaction>
</comment>
<comment type="pathway">
    <text evidence="1">Purine metabolism; IMP biosynthesis via de novo pathway; 5-amino-1-(5-phospho-D-ribosyl)imidazole from N(2)-formyl-N(1)-(5-phospho-D-ribosyl)glycinamide: step 1/2.</text>
</comment>
<comment type="subunit">
    <text evidence="1">Monomer. Part of the FGAM synthase complex composed of 1 PurL, 1 PurQ and 2 PurS subunits.</text>
</comment>
<comment type="subcellular location">
    <subcellularLocation>
        <location evidence="1">Cytoplasm</location>
    </subcellularLocation>
</comment>
<comment type="similarity">
    <text evidence="1">Belongs to the FGAMS family.</text>
</comment>
<proteinExistence type="inferred from homology"/>